<accession>Q33302</accession>
<geneLocation type="chloroplast"/>
<gene>
    <name type="primary">petN</name>
    <name type="synonym">ycf6</name>
</gene>
<sequence>MDIVSLTWAALMVVFTFSLSLVVWGRSGL</sequence>
<protein>
    <recommendedName>
        <fullName>Cytochrome b6-f complex subunit 8</fullName>
    </recommendedName>
    <alternativeName>
        <fullName>Cytochrome b6-f complex subunit PetN</fullName>
    </alternativeName>
    <alternativeName>
        <fullName>Cytochrome b6-f complex subunit VIII</fullName>
    </alternativeName>
</protein>
<keyword id="KW-0150">Chloroplast</keyword>
<keyword id="KW-0249">Electron transport</keyword>
<keyword id="KW-0472">Membrane</keyword>
<keyword id="KW-0602">Photosynthesis</keyword>
<keyword id="KW-0934">Plastid</keyword>
<keyword id="KW-1185">Reference proteome</keyword>
<keyword id="KW-0793">Thylakoid</keyword>
<keyword id="KW-0812">Transmembrane</keyword>
<keyword id="KW-1133">Transmembrane helix</keyword>
<keyword id="KW-0813">Transport</keyword>
<dbReference type="EMBL" id="X86563">
    <property type="protein sequence ID" value="CAA60275.1"/>
    <property type="molecule type" value="Genomic_DNA"/>
</dbReference>
<dbReference type="PIR" id="S58541">
    <property type="entry name" value="S58541"/>
</dbReference>
<dbReference type="RefSeq" id="NP_043014.1">
    <property type="nucleotide sequence ID" value="NC_001666.2"/>
</dbReference>
<dbReference type="SMR" id="Q33302"/>
<dbReference type="FunCoup" id="Q33302">
    <property type="interactions" value="70"/>
</dbReference>
<dbReference type="STRING" id="4577.Q33302"/>
<dbReference type="GeneID" id="1466360"/>
<dbReference type="KEGG" id="zma:1466360"/>
<dbReference type="InParanoid" id="Q33302"/>
<dbReference type="Proteomes" id="UP000007305">
    <property type="component" value="Chloroplast"/>
</dbReference>
<dbReference type="GO" id="GO:0009535">
    <property type="term" value="C:chloroplast thylakoid membrane"/>
    <property type="evidence" value="ECO:0007669"/>
    <property type="project" value="UniProtKB-SubCell"/>
</dbReference>
<dbReference type="GO" id="GO:0009512">
    <property type="term" value="C:cytochrome b6f complex"/>
    <property type="evidence" value="ECO:0007669"/>
    <property type="project" value="InterPro"/>
</dbReference>
<dbReference type="GO" id="GO:0045158">
    <property type="term" value="F:electron transporter, transferring electrons within cytochrome b6/f complex of photosystem II activity"/>
    <property type="evidence" value="ECO:0007669"/>
    <property type="project" value="InterPro"/>
</dbReference>
<dbReference type="GO" id="GO:0017004">
    <property type="term" value="P:cytochrome complex assembly"/>
    <property type="evidence" value="ECO:0007669"/>
    <property type="project" value="UniProtKB-UniRule"/>
</dbReference>
<dbReference type="GO" id="GO:0015979">
    <property type="term" value="P:photosynthesis"/>
    <property type="evidence" value="ECO:0007669"/>
    <property type="project" value="UniProtKB-KW"/>
</dbReference>
<dbReference type="HAMAP" id="MF_00395">
    <property type="entry name" value="Cytb6_f_PetN"/>
    <property type="match status" value="1"/>
</dbReference>
<dbReference type="InterPro" id="IPR036143">
    <property type="entry name" value="Cytochr_b6-f_cplx_su8_sf"/>
</dbReference>
<dbReference type="InterPro" id="IPR005497">
    <property type="entry name" value="Cytochrome_b6-f_cplx_su8"/>
</dbReference>
<dbReference type="Pfam" id="PF03742">
    <property type="entry name" value="PetN"/>
    <property type="match status" value="1"/>
</dbReference>
<dbReference type="SUPFAM" id="SSF103451">
    <property type="entry name" value="PetN subunit of the cytochrome b6f complex"/>
    <property type="match status" value="1"/>
</dbReference>
<feature type="chain" id="PRO_0000217113" description="Cytochrome b6-f complex subunit 8">
    <location>
        <begin position="1"/>
        <end position="29"/>
    </location>
</feature>
<feature type="transmembrane region" description="Helical" evidence="2">
    <location>
        <begin position="3"/>
        <end position="23"/>
    </location>
</feature>
<comment type="function">
    <text evidence="1">Component of the cytochrome b6-f complex, which mediates electron transfer between photosystem II (PSII) and photosystem I (PSI), cyclic electron flow around PSI, and state transitions.</text>
</comment>
<comment type="subunit">
    <text evidence="1">The 4 large subunits of the cytochrome b6-f complex are cytochrome b6, subunit IV (17 kDa polypeptide, PetD), cytochrome f and the Rieske protein, while the 4 small subunits are PetG, PetL, PetM and PetN. The complex functions as a dimer (By similarity).</text>
</comment>
<comment type="subcellular location">
    <subcellularLocation>
        <location evidence="1">Plastid</location>
        <location evidence="1">Chloroplast thylakoid membrane</location>
        <topology evidence="1">Single-pass membrane protein</topology>
    </subcellularLocation>
</comment>
<comment type="similarity">
    <text evidence="3">Belongs to the PetN family.</text>
</comment>
<organism>
    <name type="scientific">Zea mays</name>
    <name type="common">Maize</name>
    <dbReference type="NCBI Taxonomy" id="4577"/>
    <lineage>
        <taxon>Eukaryota</taxon>
        <taxon>Viridiplantae</taxon>
        <taxon>Streptophyta</taxon>
        <taxon>Embryophyta</taxon>
        <taxon>Tracheophyta</taxon>
        <taxon>Spermatophyta</taxon>
        <taxon>Magnoliopsida</taxon>
        <taxon>Liliopsida</taxon>
        <taxon>Poales</taxon>
        <taxon>Poaceae</taxon>
        <taxon>PACMAD clade</taxon>
        <taxon>Panicoideae</taxon>
        <taxon>Andropogonodae</taxon>
        <taxon>Andropogoneae</taxon>
        <taxon>Tripsacinae</taxon>
        <taxon>Zea</taxon>
    </lineage>
</organism>
<evidence type="ECO:0000250" key="1"/>
<evidence type="ECO:0000255" key="2"/>
<evidence type="ECO:0000305" key="3"/>
<name>PETN_MAIZE</name>
<reference key="1">
    <citation type="journal article" date="1995" name="J. Mol. Biol.">
        <title>Complete sequence of the maize chloroplast genome: gene content, hotspots of divergence and fine tuning of genetic information by transcript editing.</title>
        <authorList>
            <person name="Maier R.M."/>
            <person name="Neckermann K."/>
            <person name="Igloi G.L."/>
            <person name="Koessel H."/>
        </authorList>
    </citation>
    <scope>NUCLEOTIDE SEQUENCE [LARGE SCALE GENOMIC DNA]</scope>
    <source>
        <strain>cv. B73</strain>
    </source>
</reference>
<proteinExistence type="inferred from homology"/>